<dbReference type="EMBL" id="AK007308">
    <property type="protein sequence ID" value="BAB24947.1"/>
    <property type="molecule type" value="mRNA"/>
</dbReference>
<dbReference type="EMBL" id="AL596025">
    <property type="protein sequence ID" value="CAI24583.1"/>
    <property type="molecule type" value="Genomic_DNA"/>
</dbReference>
<dbReference type="EMBL" id="BC043075">
    <property type="protein sequence ID" value="AAH43075.1"/>
    <property type="molecule type" value="mRNA"/>
</dbReference>
<dbReference type="CCDS" id="CCDS24845.1"/>
<dbReference type="RefSeq" id="NP_001289303.1">
    <property type="nucleotide sequence ID" value="NM_001302374.1"/>
</dbReference>
<dbReference type="RefSeq" id="NP_001289304.1">
    <property type="nucleotide sequence ID" value="NM_001302375.1"/>
</dbReference>
<dbReference type="RefSeq" id="NP_080383.2">
    <property type="nucleotide sequence ID" value="NM_026107.3"/>
</dbReference>
<dbReference type="RefSeq" id="XP_006533780.1">
    <property type="nucleotide sequence ID" value="XM_006533717.3"/>
</dbReference>
<dbReference type="SMR" id="Q810A1"/>
<dbReference type="FunCoup" id="Q810A1">
    <property type="interactions" value="483"/>
</dbReference>
<dbReference type="STRING" id="10090.ENSMUSP00000018491"/>
<dbReference type="GlyGen" id="Q810A1">
    <property type="glycosylation" value="1 site, 1 O-linked glycan (1 site)"/>
</dbReference>
<dbReference type="iPTMnet" id="Q810A1"/>
<dbReference type="PhosphoSitePlus" id="Q810A1"/>
<dbReference type="PaxDb" id="10090-ENSMUSP00000018491"/>
<dbReference type="ProteomicsDB" id="275039"/>
<dbReference type="Antibodypedia" id="1806">
    <property type="antibodies" value="168 antibodies from 28 providers"/>
</dbReference>
<dbReference type="DNASU" id="52712"/>
<dbReference type="Ensembl" id="ENSMUST00000018491.8">
    <property type="protein sequence ID" value="ENSMUSP00000018491.8"/>
    <property type="gene ID" value="ENSMUSG00000018347.17"/>
</dbReference>
<dbReference type="Ensembl" id="ENSMUST00000071465.9">
    <property type="protein sequence ID" value="ENSMUSP00000071406.3"/>
    <property type="gene ID" value="ENSMUSG00000018347.17"/>
</dbReference>
<dbReference type="GeneID" id="52712"/>
<dbReference type="KEGG" id="mmu:52712"/>
<dbReference type="UCSC" id="uc007jld.2">
    <property type="organism name" value="mouse"/>
</dbReference>
<dbReference type="AGR" id="MGI:1289293"/>
<dbReference type="CTD" id="52712"/>
<dbReference type="MGI" id="MGI:1289293">
    <property type="gene designation" value="Zkscan6"/>
</dbReference>
<dbReference type="VEuPathDB" id="HostDB:ENSMUSG00000018347"/>
<dbReference type="eggNOG" id="KOG1721">
    <property type="taxonomic scope" value="Eukaryota"/>
</dbReference>
<dbReference type="GeneTree" id="ENSGT00940000161617"/>
<dbReference type="HOGENOM" id="CLU_002678_49_10_1"/>
<dbReference type="InParanoid" id="Q810A1"/>
<dbReference type="OMA" id="NYRDQEP"/>
<dbReference type="OrthoDB" id="6077919at2759"/>
<dbReference type="PhylomeDB" id="Q810A1"/>
<dbReference type="TreeFam" id="TF337489"/>
<dbReference type="Reactome" id="R-MMU-212436">
    <property type="pathway name" value="Generic Transcription Pathway"/>
</dbReference>
<dbReference type="BioGRID-ORCS" id="52712">
    <property type="hits" value="4 hits in 77 CRISPR screens"/>
</dbReference>
<dbReference type="ChiTaRS" id="Zkscan6">
    <property type="organism name" value="mouse"/>
</dbReference>
<dbReference type="PRO" id="PR:Q810A1"/>
<dbReference type="Proteomes" id="UP000000589">
    <property type="component" value="Chromosome 11"/>
</dbReference>
<dbReference type="RNAct" id="Q810A1">
    <property type="molecule type" value="protein"/>
</dbReference>
<dbReference type="Bgee" id="ENSMUSG00000018347">
    <property type="expression patterns" value="Expressed in primary oocyte and 247 other cell types or tissues"/>
</dbReference>
<dbReference type="GO" id="GO:0005634">
    <property type="term" value="C:nucleus"/>
    <property type="evidence" value="ECO:0007669"/>
    <property type="project" value="UniProtKB-SubCell"/>
</dbReference>
<dbReference type="GO" id="GO:0003677">
    <property type="term" value="F:DNA binding"/>
    <property type="evidence" value="ECO:0007669"/>
    <property type="project" value="UniProtKB-KW"/>
</dbReference>
<dbReference type="GO" id="GO:0008270">
    <property type="term" value="F:zinc ion binding"/>
    <property type="evidence" value="ECO:0007669"/>
    <property type="project" value="UniProtKB-KW"/>
</dbReference>
<dbReference type="GO" id="GO:0006355">
    <property type="term" value="P:regulation of DNA-templated transcription"/>
    <property type="evidence" value="ECO:0007669"/>
    <property type="project" value="InterPro"/>
</dbReference>
<dbReference type="CDD" id="cd07765">
    <property type="entry name" value="KRAB_A-box"/>
    <property type="match status" value="1"/>
</dbReference>
<dbReference type="CDD" id="cd07936">
    <property type="entry name" value="SCAN"/>
    <property type="match status" value="1"/>
</dbReference>
<dbReference type="FunFam" id="3.30.160.60:FF:001183">
    <property type="entry name" value="Zinc finger protein 18"/>
    <property type="match status" value="1"/>
</dbReference>
<dbReference type="FunFam" id="3.30.160.60:FF:001193">
    <property type="entry name" value="Zinc finger protein 18"/>
    <property type="match status" value="1"/>
</dbReference>
<dbReference type="FunFam" id="1.10.4020.10:FF:000001">
    <property type="entry name" value="zinc finger protein 263 isoform X1"/>
    <property type="match status" value="1"/>
</dbReference>
<dbReference type="FunFam" id="3.30.160.60:FF:000690">
    <property type="entry name" value="Zinc finger protein 354C"/>
    <property type="match status" value="1"/>
</dbReference>
<dbReference type="FunFam" id="3.30.160.60:FF:000176">
    <property type="entry name" value="zinc finger protein 70"/>
    <property type="match status" value="1"/>
</dbReference>
<dbReference type="Gene3D" id="6.10.140.140">
    <property type="match status" value="1"/>
</dbReference>
<dbReference type="Gene3D" id="3.30.160.60">
    <property type="entry name" value="Classic Zinc Finger"/>
    <property type="match status" value="5"/>
</dbReference>
<dbReference type="Gene3D" id="1.10.4020.10">
    <property type="entry name" value="DNA breaking-rejoining enzymes"/>
    <property type="match status" value="1"/>
</dbReference>
<dbReference type="InterPro" id="IPR001909">
    <property type="entry name" value="KRAB"/>
</dbReference>
<dbReference type="InterPro" id="IPR036051">
    <property type="entry name" value="KRAB_dom_sf"/>
</dbReference>
<dbReference type="InterPro" id="IPR003309">
    <property type="entry name" value="SCAN_dom"/>
</dbReference>
<dbReference type="InterPro" id="IPR038269">
    <property type="entry name" value="SCAN_sf"/>
</dbReference>
<dbReference type="InterPro" id="IPR036236">
    <property type="entry name" value="Znf_C2H2_sf"/>
</dbReference>
<dbReference type="InterPro" id="IPR013087">
    <property type="entry name" value="Znf_C2H2_type"/>
</dbReference>
<dbReference type="PANTHER" id="PTHR23226">
    <property type="entry name" value="ZINC FINGER AND SCAN DOMAIN-CONTAINING"/>
    <property type="match status" value="1"/>
</dbReference>
<dbReference type="PANTHER" id="PTHR23226:SF190">
    <property type="entry name" value="ZINC FINGER PROTEIN 18"/>
    <property type="match status" value="1"/>
</dbReference>
<dbReference type="Pfam" id="PF01352">
    <property type="entry name" value="KRAB"/>
    <property type="match status" value="1"/>
</dbReference>
<dbReference type="Pfam" id="PF02023">
    <property type="entry name" value="SCAN"/>
    <property type="match status" value="1"/>
</dbReference>
<dbReference type="Pfam" id="PF00096">
    <property type="entry name" value="zf-C2H2"/>
    <property type="match status" value="5"/>
</dbReference>
<dbReference type="SMART" id="SM00349">
    <property type="entry name" value="KRAB"/>
    <property type="match status" value="1"/>
</dbReference>
<dbReference type="SMART" id="SM00431">
    <property type="entry name" value="SCAN"/>
    <property type="match status" value="1"/>
</dbReference>
<dbReference type="SMART" id="SM00355">
    <property type="entry name" value="ZnF_C2H2"/>
    <property type="match status" value="5"/>
</dbReference>
<dbReference type="SUPFAM" id="SSF57667">
    <property type="entry name" value="beta-beta-alpha zinc fingers"/>
    <property type="match status" value="3"/>
</dbReference>
<dbReference type="SUPFAM" id="SSF109640">
    <property type="entry name" value="KRAB domain (Kruppel-associated box)"/>
    <property type="match status" value="1"/>
</dbReference>
<dbReference type="SUPFAM" id="SSF47353">
    <property type="entry name" value="Retrovirus capsid dimerization domain-like"/>
    <property type="match status" value="1"/>
</dbReference>
<dbReference type="PROSITE" id="PS50805">
    <property type="entry name" value="KRAB"/>
    <property type="match status" value="1"/>
</dbReference>
<dbReference type="PROSITE" id="PS50804">
    <property type="entry name" value="SCAN_BOX"/>
    <property type="match status" value="1"/>
</dbReference>
<dbReference type="PROSITE" id="PS00028">
    <property type="entry name" value="ZINC_FINGER_C2H2_1"/>
    <property type="match status" value="5"/>
</dbReference>
<dbReference type="PROSITE" id="PS50157">
    <property type="entry name" value="ZINC_FINGER_C2H2_2"/>
    <property type="match status" value="5"/>
</dbReference>
<name>ZNF18_MOUSE</name>
<accession>Q810A1</accession>
<accession>Q9D972</accession>
<proteinExistence type="evidence at transcript level"/>
<protein>
    <recommendedName>
        <fullName>Zinc finger protein 18</fullName>
    </recommendedName>
    <alternativeName>
        <fullName>Zinc finger protein 535</fullName>
    </alternativeName>
    <alternativeName>
        <fullName>Zinc finger protein with KRAB and SCAN domains 6</fullName>
    </alternativeName>
</protein>
<comment type="function">
    <text>May be involved in transcriptional regulation.</text>
</comment>
<comment type="subcellular location">
    <subcellularLocation>
        <location evidence="3">Nucleus</location>
    </subcellularLocation>
</comment>
<comment type="similarity">
    <text evidence="5">Belongs to the krueppel C2H2-type zinc-finger protein family.</text>
</comment>
<organism>
    <name type="scientific">Mus musculus</name>
    <name type="common">Mouse</name>
    <dbReference type="NCBI Taxonomy" id="10090"/>
    <lineage>
        <taxon>Eukaryota</taxon>
        <taxon>Metazoa</taxon>
        <taxon>Chordata</taxon>
        <taxon>Craniata</taxon>
        <taxon>Vertebrata</taxon>
        <taxon>Euteleostomi</taxon>
        <taxon>Mammalia</taxon>
        <taxon>Eutheria</taxon>
        <taxon>Euarchontoglires</taxon>
        <taxon>Glires</taxon>
        <taxon>Rodentia</taxon>
        <taxon>Myomorpha</taxon>
        <taxon>Muroidea</taxon>
        <taxon>Muridae</taxon>
        <taxon>Murinae</taxon>
        <taxon>Mus</taxon>
        <taxon>Mus</taxon>
    </lineage>
</organism>
<gene>
    <name type="primary">Znf18</name>
    <name type="synonym">Zfp535</name>
    <name type="synonym">Zkscan6</name>
</gene>
<sequence length="556" mass="62929">MPVDLGQALGPLPFLAKAEDATFSASDATQQRELANPETARQLFRQFRYQVLSGPQETLRQLRKLCFQWLRPEVHTKEQILELLMLEQFLTILPGEIQMWVRKQCPGSGQEAVTLVESLKGEPQKLWHWISTQVLGQEIPFEKENLTHCPGDKLEPALEVEPSLEVAPQDLPLQNSSSATGELLSHGVKEESDMEPELALAASQLPARPEERPVRDQELGTAVLPPLQEEQWRHLDSTQKEQYWDLMLETYGKMVSGVAGISNSKPDLTNLAEYGEELVGLHLHGAEKMARLPCKEDRQENDKENLNLENHRDQGCLDVFCQASGEAPPQTALSDFFGESEPHRFGGDSVPEALENHQGEGTGAHLFPYERGSGKQPGQHIQSSSLGELTALWLEEKREASQKGQARSPMAQKLPTCRECGKTFYRNSQLVFHQRTHTGETYFHCHICKKAFLRSSDFVKHQRTHTGEKPCKCDYCGKGFSDFSGLRHHEKIHTGEKPYKCPLCEKSFIQRSNFNRHQRVHTGEKPYKCTHCGKQFSWSSSLDKHQRSHLGKMPCP</sequence>
<evidence type="ECO:0000255" key="1">
    <source>
        <dbReference type="PROSITE-ProRule" id="PRU00042"/>
    </source>
</evidence>
<evidence type="ECO:0000255" key="2">
    <source>
        <dbReference type="PROSITE-ProRule" id="PRU00119"/>
    </source>
</evidence>
<evidence type="ECO:0000255" key="3">
    <source>
        <dbReference type="PROSITE-ProRule" id="PRU00187"/>
    </source>
</evidence>
<evidence type="ECO:0000256" key="4">
    <source>
        <dbReference type="SAM" id="MobiDB-lite"/>
    </source>
</evidence>
<evidence type="ECO:0000305" key="5"/>
<reference key="1">
    <citation type="journal article" date="2005" name="Science">
        <title>The transcriptional landscape of the mammalian genome.</title>
        <authorList>
            <person name="Carninci P."/>
            <person name="Kasukawa T."/>
            <person name="Katayama S."/>
            <person name="Gough J."/>
            <person name="Frith M.C."/>
            <person name="Maeda N."/>
            <person name="Oyama R."/>
            <person name="Ravasi T."/>
            <person name="Lenhard B."/>
            <person name="Wells C."/>
            <person name="Kodzius R."/>
            <person name="Shimokawa K."/>
            <person name="Bajic V.B."/>
            <person name="Brenner S.E."/>
            <person name="Batalov S."/>
            <person name="Forrest A.R."/>
            <person name="Zavolan M."/>
            <person name="Davis M.J."/>
            <person name="Wilming L.G."/>
            <person name="Aidinis V."/>
            <person name="Allen J.E."/>
            <person name="Ambesi-Impiombato A."/>
            <person name="Apweiler R."/>
            <person name="Aturaliya R.N."/>
            <person name="Bailey T.L."/>
            <person name="Bansal M."/>
            <person name="Baxter L."/>
            <person name="Beisel K.W."/>
            <person name="Bersano T."/>
            <person name="Bono H."/>
            <person name="Chalk A.M."/>
            <person name="Chiu K.P."/>
            <person name="Choudhary V."/>
            <person name="Christoffels A."/>
            <person name="Clutterbuck D.R."/>
            <person name="Crowe M.L."/>
            <person name="Dalla E."/>
            <person name="Dalrymple B.P."/>
            <person name="de Bono B."/>
            <person name="Della Gatta G."/>
            <person name="di Bernardo D."/>
            <person name="Down T."/>
            <person name="Engstrom P."/>
            <person name="Fagiolini M."/>
            <person name="Faulkner G."/>
            <person name="Fletcher C.F."/>
            <person name="Fukushima T."/>
            <person name="Furuno M."/>
            <person name="Futaki S."/>
            <person name="Gariboldi M."/>
            <person name="Georgii-Hemming P."/>
            <person name="Gingeras T.R."/>
            <person name="Gojobori T."/>
            <person name="Green R.E."/>
            <person name="Gustincich S."/>
            <person name="Harbers M."/>
            <person name="Hayashi Y."/>
            <person name="Hensch T.K."/>
            <person name="Hirokawa N."/>
            <person name="Hill D."/>
            <person name="Huminiecki L."/>
            <person name="Iacono M."/>
            <person name="Ikeo K."/>
            <person name="Iwama A."/>
            <person name="Ishikawa T."/>
            <person name="Jakt M."/>
            <person name="Kanapin A."/>
            <person name="Katoh M."/>
            <person name="Kawasawa Y."/>
            <person name="Kelso J."/>
            <person name="Kitamura H."/>
            <person name="Kitano H."/>
            <person name="Kollias G."/>
            <person name="Krishnan S.P."/>
            <person name="Kruger A."/>
            <person name="Kummerfeld S.K."/>
            <person name="Kurochkin I.V."/>
            <person name="Lareau L.F."/>
            <person name="Lazarevic D."/>
            <person name="Lipovich L."/>
            <person name="Liu J."/>
            <person name="Liuni S."/>
            <person name="McWilliam S."/>
            <person name="Madan Babu M."/>
            <person name="Madera M."/>
            <person name="Marchionni L."/>
            <person name="Matsuda H."/>
            <person name="Matsuzawa S."/>
            <person name="Miki H."/>
            <person name="Mignone F."/>
            <person name="Miyake S."/>
            <person name="Morris K."/>
            <person name="Mottagui-Tabar S."/>
            <person name="Mulder N."/>
            <person name="Nakano N."/>
            <person name="Nakauchi H."/>
            <person name="Ng P."/>
            <person name="Nilsson R."/>
            <person name="Nishiguchi S."/>
            <person name="Nishikawa S."/>
            <person name="Nori F."/>
            <person name="Ohara O."/>
            <person name="Okazaki Y."/>
            <person name="Orlando V."/>
            <person name="Pang K.C."/>
            <person name="Pavan W.J."/>
            <person name="Pavesi G."/>
            <person name="Pesole G."/>
            <person name="Petrovsky N."/>
            <person name="Piazza S."/>
            <person name="Reed J."/>
            <person name="Reid J.F."/>
            <person name="Ring B.Z."/>
            <person name="Ringwald M."/>
            <person name="Rost B."/>
            <person name="Ruan Y."/>
            <person name="Salzberg S.L."/>
            <person name="Sandelin A."/>
            <person name="Schneider C."/>
            <person name="Schoenbach C."/>
            <person name="Sekiguchi K."/>
            <person name="Semple C.A."/>
            <person name="Seno S."/>
            <person name="Sessa L."/>
            <person name="Sheng Y."/>
            <person name="Shibata Y."/>
            <person name="Shimada H."/>
            <person name="Shimada K."/>
            <person name="Silva D."/>
            <person name="Sinclair B."/>
            <person name="Sperling S."/>
            <person name="Stupka E."/>
            <person name="Sugiura K."/>
            <person name="Sultana R."/>
            <person name="Takenaka Y."/>
            <person name="Taki K."/>
            <person name="Tammoja K."/>
            <person name="Tan S.L."/>
            <person name="Tang S."/>
            <person name="Taylor M.S."/>
            <person name="Tegner J."/>
            <person name="Teichmann S.A."/>
            <person name="Ueda H.R."/>
            <person name="van Nimwegen E."/>
            <person name="Verardo R."/>
            <person name="Wei C.L."/>
            <person name="Yagi K."/>
            <person name="Yamanishi H."/>
            <person name="Zabarovsky E."/>
            <person name="Zhu S."/>
            <person name="Zimmer A."/>
            <person name="Hide W."/>
            <person name="Bult C."/>
            <person name="Grimmond S.M."/>
            <person name="Teasdale R.D."/>
            <person name="Liu E.T."/>
            <person name="Brusic V."/>
            <person name="Quackenbush J."/>
            <person name="Wahlestedt C."/>
            <person name="Mattick J.S."/>
            <person name="Hume D.A."/>
            <person name="Kai C."/>
            <person name="Sasaki D."/>
            <person name="Tomaru Y."/>
            <person name="Fukuda S."/>
            <person name="Kanamori-Katayama M."/>
            <person name="Suzuki M."/>
            <person name="Aoki J."/>
            <person name="Arakawa T."/>
            <person name="Iida J."/>
            <person name="Imamura K."/>
            <person name="Itoh M."/>
            <person name="Kato T."/>
            <person name="Kawaji H."/>
            <person name="Kawagashira N."/>
            <person name="Kawashima T."/>
            <person name="Kojima M."/>
            <person name="Kondo S."/>
            <person name="Konno H."/>
            <person name="Nakano K."/>
            <person name="Ninomiya N."/>
            <person name="Nishio T."/>
            <person name="Okada M."/>
            <person name="Plessy C."/>
            <person name="Shibata K."/>
            <person name="Shiraki T."/>
            <person name="Suzuki S."/>
            <person name="Tagami M."/>
            <person name="Waki K."/>
            <person name="Watahiki A."/>
            <person name="Okamura-Oho Y."/>
            <person name="Suzuki H."/>
            <person name="Kawai J."/>
            <person name="Hayashizaki Y."/>
        </authorList>
    </citation>
    <scope>NUCLEOTIDE SEQUENCE [LARGE SCALE MRNA]</scope>
    <source>
        <strain>C57BL/6J</strain>
        <tissue>Testis</tissue>
    </source>
</reference>
<reference key="2">
    <citation type="journal article" date="2009" name="PLoS Biol.">
        <title>Lineage-specific biology revealed by a finished genome assembly of the mouse.</title>
        <authorList>
            <person name="Church D.M."/>
            <person name="Goodstadt L."/>
            <person name="Hillier L.W."/>
            <person name="Zody M.C."/>
            <person name="Goldstein S."/>
            <person name="She X."/>
            <person name="Bult C.J."/>
            <person name="Agarwala R."/>
            <person name="Cherry J.L."/>
            <person name="DiCuccio M."/>
            <person name="Hlavina W."/>
            <person name="Kapustin Y."/>
            <person name="Meric P."/>
            <person name="Maglott D."/>
            <person name="Birtle Z."/>
            <person name="Marques A.C."/>
            <person name="Graves T."/>
            <person name="Zhou S."/>
            <person name="Teague B."/>
            <person name="Potamousis K."/>
            <person name="Churas C."/>
            <person name="Place M."/>
            <person name="Herschleb J."/>
            <person name="Runnheim R."/>
            <person name="Forrest D."/>
            <person name="Amos-Landgraf J."/>
            <person name="Schwartz D.C."/>
            <person name="Cheng Z."/>
            <person name="Lindblad-Toh K."/>
            <person name="Eichler E.E."/>
            <person name="Ponting C.P."/>
        </authorList>
    </citation>
    <scope>NUCLEOTIDE SEQUENCE [LARGE SCALE GENOMIC DNA]</scope>
    <source>
        <strain>C57BL/6J</strain>
    </source>
</reference>
<reference key="3">
    <citation type="journal article" date="2004" name="Genome Res.">
        <title>The status, quality, and expansion of the NIH full-length cDNA project: the Mammalian Gene Collection (MGC).</title>
        <authorList>
            <consortium name="The MGC Project Team"/>
        </authorList>
    </citation>
    <scope>NUCLEOTIDE SEQUENCE [LARGE SCALE MRNA]</scope>
    <source>
        <strain>C57BL/6J</strain>
        <tissue>Fetal brain</tissue>
    </source>
</reference>
<feature type="chain" id="PRO_0000047341" description="Zinc finger protein 18">
    <location>
        <begin position="1"/>
        <end position="556"/>
    </location>
</feature>
<feature type="domain" description="SCAN box" evidence="3">
    <location>
        <begin position="41"/>
        <end position="123"/>
    </location>
</feature>
<feature type="domain" description="KRAB" evidence="2">
    <location>
        <begin position="218"/>
        <end position="291"/>
    </location>
</feature>
<feature type="zinc finger region" description="C2H2-type 1" evidence="1">
    <location>
        <begin position="415"/>
        <end position="437"/>
    </location>
</feature>
<feature type="zinc finger region" description="C2H2-type 2" evidence="1">
    <location>
        <begin position="443"/>
        <end position="465"/>
    </location>
</feature>
<feature type="zinc finger region" description="C2H2-type 3" evidence="1">
    <location>
        <begin position="471"/>
        <end position="493"/>
    </location>
</feature>
<feature type="zinc finger region" description="C2H2-type 4" evidence="1">
    <location>
        <begin position="499"/>
        <end position="521"/>
    </location>
</feature>
<feature type="zinc finger region" description="C2H2-type 5" evidence="1">
    <location>
        <begin position="527"/>
        <end position="549"/>
    </location>
</feature>
<feature type="region of interest" description="Disordered" evidence="4">
    <location>
        <begin position="169"/>
        <end position="195"/>
    </location>
</feature>
<feature type="sequence conflict" description="In Ref. 1; BAB24947." evidence="5" ref="1">
    <original>A</original>
    <variation>D</variation>
    <location>
        <position position="207"/>
    </location>
</feature>
<feature type="sequence conflict" description="In Ref. 1; BAB24947." evidence="5" ref="1">
    <original>S</original>
    <variation>P</variation>
    <location>
        <position position="373"/>
    </location>
</feature>
<keyword id="KW-0238">DNA-binding</keyword>
<keyword id="KW-0479">Metal-binding</keyword>
<keyword id="KW-0539">Nucleus</keyword>
<keyword id="KW-1185">Reference proteome</keyword>
<keyword id="KW-0677">Repeat</keyword>
<keyword id="KW-0804">Transcription</keyword>
<keyword id="KW-0805">Transcription regulation</keyword>
<keyword id="KW-0862">Zinc</keyword>
<keyword id="KW-0863">Zinc-finger</keyword>